<gene>
    <name evidence="1" type="primary">rocA</name>
    <name type="ordered locus">Aflv_0249</name>
</gene>
<comment type="catalytic activity">
    <reaction evidence="1">
        <text>L-glutamate 5-semialdehyde + NAD(+) + H2O = L-glutamate + NADH + 2 H(+)</text>
        <dbReference type="Rhea" id="RHEA:30235"/>
        <dbReference type="ChEBI" id="CHEBI:15377"/>
        <dbReference type="ChEBI" id="CHEBI:15378"/>
        <dbReference type="ChEBI" id="CHEBI:29985"/>
        <dbReference type="ChEBI" id="CHEBI:57540"/>
        <dbReference type="ChEBI" id="CHEBI:57945"/>
        <dbReference type="ChEBI" id="CHEBI:58066"/>
        <dbReference type="EC" id="1.2.1.88"/>
    </reaction>
</comment>
<comment type="pathway">
    <text evidence="1">Amino-acid degradation; L-proline degradation into L-glutamate; L-glutamate from L-proline: step 2/2.</text>
</comment>
<comment type="similarity">
    <text evidence="1">Belongs to the aldehyde dehydrogenase family. RocA subfamily.</text>
</comment>
<name>ROCA_ANOFW</name>
<reference key="1">
    <citation type="journal article" date="2008" name="Genome Biol.">
        <title>Encapsulated in silica: genome, proteome and physiology of the thermophilic bacterium Anoxybacillus flavithermus WK1.</title>
        <authorList>
            <person name="Saw J.H."/>
            <person name="Mountain B.W."/>
            <person name="Feng L."/>
            <person name="Omelchenko M.V."/>
            <person name="Hou S."/>
            <person name="Saito J.A."/>
            <person name="Stott M.B."/>
            <person name="Li D."/>
            <person name="Zhao G."/>
            <person name="Wu J."/>
            <person name="Galperin M.Y."/>
            <person name="Koonin E.V."/>
            <person name="Makarova K.S."/>
            <person name="Wolf Y.I."/>
            <person name="Rigden D.J."/>
            <person name="Dunfield P.F."/>
            <person name="Wang L."/>
            <person name="Alam M."/>
        </authorList>
    </citation>
    <scope>NUCLEOTIDE SEQUENCE [LARGE SCALE GENOMIC DNA]</scope>
    <source>
        <strain>DSM 21510 / WK1</strain>
    </source>
</reference>
<sequence>MVQPYKHEPFTDFTVEANKKAFEEGLKTVQAYLGQDYPLVIGGERVMTEDKIVSINPANKTEVVGRVAKANKDLAEKAMQTADAAFKWWSKTKPEMRADILFRAAAIVRRRKHEFSALLVKEAGKPWKEADADTAEAIDFMEYYARQMLKLKDGIPVESRPGETNRFFYIPLGVGVVISPWNFPFAIMAGTTVAALVTGNTVLLKPASATPVVAYKFVEVLEEAGLPAGVLNYIPGSGAEVGDYLVDHPRTRFISFTGSRDVGIRIYERAAKVHPGQIWLKRVIAEMGGKDTIVVDKEADLELAAQSIVASAFGFSGQKCSACSRVVALEDVYDQVLNRVVELTKQLKVGNPEEQSTFMGPVIDQSAYNKIMEYIEIGKQEGKLMTGGEGDDSKGFFIQPTVFADLDPKARIMQEEIFGPVVAFTKAKDFDHALEIANNTEYGLTGAVISNNRFNLEKAREEFHVGNLYFNRGCTGAIVGYHPFGGFNMSGTDSKAGGPDYLLLHMQAKTVSEMF</sequence>
<keyword id="KW-0520">NAD</keyword>
<keyword id="KW-0560">Oxidoreductase</keyword>
<evidence type="ECO:0000255" key="1">
    <source>
        <dbReference type="HAMAP-Rule" id="MF_00733"/>
    </source>
</evidence>
<organism>
    <name type="scientific">Anoxybacillus flavithermus (strain DSM 21510 / WK1)</name>
    <dbReference type="NCBI Taxonomy" id="491915"/>
    <lineage>
        <taxon>Bacteria</taxon>
        <taxon>Bacillati</taxon>
        <taxon>Bacillota</taxon>
        <taxon>Bacilli</taxon>
        <taxon>Bacillales</taxon>
        <taxon>Anoxybacillaceae</taxon>
        <taxon>Anoxybacillus</taxon>
    </lineage>
</organism>
<feature type="chain" id="PRO_1000132748" description="1-pyrroline-5-carboxylate dehydrogenase">
    <location>
        <begin position="1"/>
        <end position="515"/>
    </location>
</feature>
<feature type="active site" evidence="1">
    <location>
        <position position="286"/>
    </location>
</feature>
<feature type="active site" evidence="1">
    <location>
        <position position="320"/>
    </location>
</feature>
<proteinExistence type="inferred from homology"/>
<protein>
    <recommendedName>
        <fullName evidence="1">1-pyrroline-5-carboxylate dehydrogenase</fullName>
        <shortName evidence="1">P5C dehydrogenase</shortName>
        <ecNumber evidence="1">1.2.1.88</ecNumber>
    </recommendedName>
    <alternativeName>
        <fullName evidence="1">L-glutamate gamma-semialdehyde dehydrogenase</fullName>
    </alternativeName>
</protein>
<dbReference type="EC" id="1.2.1.88" evidence="1"/>
<dbReference type="EMBL" id="CP000922">
    <property type="protein sequence ID" value="ACJ32633.1"/>
    <property type="molecule type" value="Genomic_DNA"/>
</dbReference>
<dbReference type="RefSeq" id="WP_012573970.1">
    <property type="nucleotide sequence ID" value="NC_011567.1"/>
</dbReference>
<dbReference type="SMR" id="B7GFV3"/>
<dbReference type="STRING" id="491915.Aflv_0249"/>
<dbReference type="GeneID" id="7036481"/>
<dbReference type="KEGG" id="afl:Aflv_0249"/>
<dbReference type="PATRIC" id="fig|491915.6.peg.254"/>
<dbReference type="eggNOG" id="COG1012">
    <property type="taxonomic scope" value="Bacteria"/>
</dbReference>
<dbReference type="HOGENOM" id="CLU_005391_0_0_9"/>
<dbReference type="UniPathway" id="UPA00261">
    <property type="reaction ID" value="UER00374"/>
</dbReference>
<dbReference type="Proteomes" id="UP000000742">
    <property type="component" value="Chromosome"/>
</dbReference>
<dbReference type="GO" id="GO:0009898">
    <property type="term" value="C:cytoplasmic side of plasma membrane"/>
    <property type="evidence" value="ECO:0007669"/>
    <property type="project" value="TreeGrafter"/>
</dbReference>
<dbReference type="GO" id="GO:0003842">
    <property type="term" value="F:1-pyrroline-5-carboxylate dehydrogenase activity"/>
    <property type="evidence" value="ECO:0007669"/>
    <property type="project" value="UniProtKB-UniRule"/>
</dbReference>
<dbReference type="GO" id="GO:0006537">
    <property type="term" value="P:glutamate biosynthetic process"/>
    <property type="evidence" value="ECO:0007669"/>
    <property type="project" value="UniProtKB-UniRule"/>
</dbReference>
<dbReference type="GO" id="GO:0010133">
    <property type="term" value="P:proline catabolic process to glutamate"/>
    <property type="evidence" value="ECO:0007669"/>
    <property type="project" value="UniProtKB-UniPathway"/>
</dbReference>
<dbReference type="CDD" id="cd07124">
    <property type="entry name" value="ALDH_PutA-P5CDH-RocA"/>
    <property type="match status" value="1"/>
</dbReference>
<dbReference type="FunFam" id="3.40.309.10:FF:000005">
    <property type="entry name" value="1-pyrroline-5-carboxylate dehydrogenase 1"/>
    <property type="match status" value="1"/>
</dbReference>
<dbReference type="FunFam" id="3.40.605.10:FF:000045">
    <property type="entry name" value="1-pyrroline-5-carboxylate dehydrogenase 1"/>
    <property type="match status" value="1"/>
</dbReference>
<dbReference type="Gene3D" id="3.40.605.10">
    <property type="entry name" value="Aldehyde Dehydrogenase, Chain A, domain 1"/>
    <property type="match status" value="1"/>
</dbReference>
<dbReference type="Gene3D" id="3.40.309.10">
    <property type="entry name" value="Aldehyde Dehydrogenase, Chain A, domain 2"/>
    <property type="match status" value="1"/>
</dbReference>
<dbReference type="HAMAP" id="MF_00733">
    <property type="entry name" value="RocA"/>
    <property type="match status" value="1"/>
</dbReference>
<dbReference type="InterPro" id="IPR016161">
    <property type="entry name" value="Ald_DH/histidinol_DH"/>
</dbReference>
<dbReference type="InterPro" id="IPR016163">
    <property type="entry name" value="Ald_DH_C"/>
</dbReference>
<dbReference type="InterPro" id="IPR016160">
    <property type="entry name" value="Ald_DH_CS_CYS"/>
</dbReference>
<dbReference type="InterPro" id="IPR029510">
    <property type="entry name" value="Ald_DH_CS_GLU"/>
</dbReference>
<dbReference type="InterPro" id="IPR016162">
    <property type="entry name" value="Ald_DH_N"/>
</dbReference>
<dbReference type="InterPro" id="IPR015590">
    <property type="entry name" value="Aldehyde_DH_dom"/>
</dbReference>
<dbReference type="InterPro" id="IPR050485">
    <property type="entry name" value="Proline_metab_enzyme"/>
</dbReference>
<dbReference type="InterPro" id="IPR005932">
    <property type="entry name" value="RocA"/>
</dbReference>
<dbReference type="InterPro" id="IPR047597">
    <property type="entry name" value="RocA_bacillales"/>
</dbReference>
<dbReference type="NCBIfam" id="TIGR01237">
    <property type="entry name" value="D1pyr5carbox2"/>
    <property type="match status" value="1"/>
</dbReference>
<dbReference type="NCBIfam" id="NF002852">
    <property type="entry name" value="PRK03137.1"/>
    <property type="match status" value="1"/>
</dbReference>
<dbReference type="PANTHER" id="PTHR42862">
    <property type="entry name" value="DELTA-1-PYRROLINE-5-CARBOXYLATE DEHYDROGENASE 1, ISOFORM A-RELATED"/>
    <property type="match status" value="1"/>
</dbReference>
<dbReference type="PANTHER" id="PTHR42862:SF1">
    <property type="entry name" value="DELTA-1-PYRROLINE-5-CARBOXYLATE DEHYDROGENASE 2, ISOFORM A-RELATED"/>
    <property type="match status" value="1"/>
</dbReference>
<dbReference type="Pfam" id="PF00171">
    <property type="entry name" value="Aldedh"/>
    <property type="match status" value="1"/>
</dbReference>
<dbReference type="SUPFAM" id="SSF53720">
    <property type="entry name" value="ALDH-like"/>
    <property type="match status" value="1"/>
</dbReference>
<dbReference type="PROSITE" id="PS00070">
    <property type="entry name" value="ALDEHYDE_DEHYDR_CYS"/>
    <property type="match status" value="1"/>
</dbReference>
<dbReference type="PROSITE" id="PS00687">
    <property type="entry name" value="ALDEHYDE_DEHYDR_GLU"/>
    <property type="match status" value="1"/>
</dbReference>
<accession>B7GFV3</accession>